<organism>
    <name type="scientific">Lucilia cuprina</name>
    <name type="common">Green bottle fly</name>
    <name type="synonym">Australian sheep blowfly</name>
    <dbReference type="NCBI Taxonomy" id="7375"/>
    <lineage>
        <taxon>Eukaryota</taxon>
        <taxon>Metazoa</taxon>
        <taxon>Ecdysozoa</taxon>
        <taxon>Arthropoda</taxon>
        <taxon>Hexapoda</taxon>
        <taxon>Insecta</taxon>
        <taxon>Pterygota</taxon>
        <taxon>Neoptera</taxon>
        <taxon>Endopterygota</taxon>
        <taxon>Diptera</taxon>
        <taxon>Brachycera</taxon>
        <taxon>Muscomorpha</taxon>
        <taxon>Oestroidea</taxon>
        <taxon>Calliphoridae</taxon>
        <taxon>Luciliinae</taxon>
        <taxon>Lucilia</taxon>
    </lineage>
</organism>
<feature type="peptide" id="PRO_0000421470" description="Lucifensin" evidence="3">
    <location>
        <begin position="1"/>
        <end position="40"/>
    </location>
</feature>
<feature type="disulfide bond" evidence="2 3">
    <location>
        <begin position="3"/>
        <end position="30"/>
    </location>
</feature>
<feature type="disulfide bond" evidence="2 3">
    <location>
        <begin position="16"/>
        <end position="36"/>
    </location>
</feature>
<feature type="disulfide bond" evidence="2 3">
    <location>
        <begin position="20"/>
        <end position="38"/>
    </location>
</feature>
<sequence length="40" mass="4137">ATCDLLSGTGIKHSACAAHCLLRGNRGGYCNGRAICVCRN</sequence>
<comment type="function">
    <text evidence="1 3">Shows strong antibacterial activity against the Gram-positive bacterium M.luteus (PubMed:23802451). Also shows antibacterial activity against the Gram-positive bacteria E.fecalis, S.aureus, S.carnosus, S.pneumoniae and S.pyogenes and against a number of methicillin-resistant S.aureus and glycopeptide-intermediate S.aureus isolates (By similarity). Does not show antibacterial activity against Gram-negative bacteria or antifungal activity against C.utilis (By similarity). Shows slight antifungal activity against C.albicans (By similarity).</text>
</comment>
<comment type="subcellular location">
    <subcellularLocation>
        <location evidence="2 3">Secreted</location>
    </subcellularLocation>
</comment>
<comment type="tissue specificity">
    <text evidence="3">Larval fat body, hemolymph and salivary glands (at protein level).</text>
</comment>
<comment type="PTM">
    <text evidence="1">The disulfide bonds are essential for antimicrobial activity.</text>
</comment>
<comment type="mass spectrometry" mass="4127.93" method="Electrospray" evidence="3"/>
<comment type="miscellaneous">
    <text evidence="3">During maggot debridement therapy which involves the controlled application of cultured sterile larvae to an infected chronic non-healing wound, one of the key factors which protects larvae against the infectious wound environment and contributes to wound healing through its antimicrobial activity.</text>
</comment>
<comment type="similarity">
    <text evidence="2">Belongs to the invertebrate defensin family. Type 1 subfamily.</text>
</comment>
<proteinExistence type="evidence at protein level"/>
<name>LUCFE_LUCCU</name>
<evidence type="ECO:0000250" key="1">
    <source>
        <dbReference type="UniProtKB" id="P86471"/>
    </source>
</evidence>
<evidence type="ECO:0000255" key="2">
    <source>
        <dbReference type="PROSITE-ProRule" id="PRU00710"/>
    </source>
</evidence>
<evidence type="ECO:0000269" key="3">
    <source>
    </source>
</evidence>
<evidence type="ECO:0000303" key="4">
    <source>
    </source>
</evidence>
<evidence type="ECO:0000305" key="5"/>
<keyword id="KW-0044">Antibiotic</keyword>
<keyword id="KW-0929">Antimicrobial</keyword>
<keyword id="KW-0211">Defensin</keyword>
<keyword id="KW-0903">Direct protein sequencing</keyword>
<keyword id="KW-1015">Disulfide bond</keyword>
<keyword id="KW-0295">Fungicide</keyword>
<keyword id="KW-0391">Immunity</keyword>
<keyword id="KW-0399">Innate immunity</keyword>
<keyword id="KW-0964">Secreted</keyword>
<reference evidence="5" key="1">
    <citation type="journal article" date="2013" name="J. Med. Entomol.">
        <title>Lucifensin II, a defensin of medicinal maggots of the blowfly Lucilia cuprina (Diptera: Calliphoridae).</title>
        <authorList>
            <person name="El Shazely B."/>
            <person name="Veverka V."/>
            <person name="Fucik V."/>
            <person name="Voburka Z."/>
            <person name="Zdarek J."/>
            <person name="Cerovsky V."/>
        </authorList>
    </citation>
    <scope>PROTEIN SEQUENCE</scope>
    <scope>FUNCTION</scope>
    <scope>SUBCELLULAR LOCATION</scope>
    <scope>TISSUE SPECIFICITY</scope>
    <scope>MASS SPECTROMETRY</scope>
    <scope>DISULFIDE BONDS</scope>
    <source>
        <tissue evidence="4">Larval hemolymph</tissue>
    </source>
</reference>
<protein>
    <recommendedName>
        <fullName evidence="1">Lucifensin</fullName>
    </recommendedName>
    <alternativeName>
        <fullName evidence="4">Lucifensin II</fullName>
    </alternativeName>
</protein>
<dbReference type="BMRB" id="B3EWY5"/>
<dbReference type="SMR" id="B3EWY5"/>
<dbReference type="EnsemblMetazoa" id="XM_046952781.1">
    <property type="protein sequence ID" value="XP_046808737.1"/>
    <property type="gene ID" value="LOC111689297"/>
</dbReference>
<dbReference type="OrthoDB" id="10038290at2759"/>
<dbReference type="GO" id="GO:0005576">
    <property type="term" value="C:extracellular region"/>
    <property type="evidence" value="ECO:0000314"/>
    <property type="project" value="UniProtKB"/>
</dbReference>
<dbReference type="GO" id="GO:0005615">
    <property type="term" value="C:extracellular space"/>
    <property type="evidence" value="ECO:0007669"/>
    <property type="project" value="TreeGrafter"/>
</dbReference>
<dbReference type="GO" id="GO:0050832">
    <property type="term" value="P:defense response to fungus"/>
    <property type="evidence" value="ECO:0007669"/>
    <property type="project" value="UniProtKB-KW"/>
</dbReference>
<dbReference type="GO" id="GO:0050830">
    <property type="term" value="P:defense response to Gram-positive bacterium"/>
    <property type="evidence" value="ECO:0000314"/>
    <property type="project" value="UniProtKB"/>
</dbReference>
<dbReference type="GO" id="GO:0006959">
    <property type="term" value="P:humoral immune response"/>
    <property type="evidence" value="ECO:0007669"/>
    <property type="project" value="TreeGrafter"/>
</dbReference>
<dbReference type="GO" id="GO:0045087">
    <property type="term" value="P:innate immune response"/>
    <property type="evidence" value="ECO:0007669"/>
    <property type="project" value="UniProtKB-KW"/>
</dbReference>
<dbReference type="GO" id="GO:0031640">
    <property type="term" value="P:killing of cells of another organism"/>
    <property type="evidence" value="ECO:0007669"/>
    <property type="project" value="UniProtKB-KW"/>
</dbReference>
<dbReference type="CDD" id="cd21806">
    <property type="entry name" value="DEFL_defensin-like"/>
    <property type="match status" value="1"/>
</dbReference>
<dbReference type="FunFam" id="3.30.30.10:FF:000005">
    <property type="entry name" value="Defensin"/>
    <property type="match status" value="1"/>
</dbReference>
<dbReference type="Gene3D" id="3.30.30.10">
    <property type="entry name" value="Knottin, scorpion toxin-like"/>
    <property type="match status" value="1"/>
</dbReference>
<dbReference type="InterPro" id="IPR017982">
    <property type="entry name" value="Defensin_insect"/>
</dbReference>
<dbReference type="InterPro" id="IPR001542">
    <property type="entry name" value="Defensin_invertebrate/fungal"/>
</dbReference>
<dbReference type="InterPro" id="IPR036574">
    <property type="entry name" value="Scorpion_toxin-like_sf"/>
</dbReference>
<dbReference type="PANTHER" id="PTHR13645">
    <property type="entry name" value="DEFENSIN"/>
    <property type="match status" value="1"/>
</dbReference>
<dbReference type="PANTHER" id="PTHR13645:SF0">
    <property type="entry name" value="DEFENSIN"/>
    <property type="match status" value="1"/>
</dbReference>
<dbReference type="Pfam" id="PF01097">
    <property type="entry name" value="Defensin_2"/>
    <property type="match status" value="1"/>
</dbReference>
<dbReference type="PRINTS" id="PR00271">
    <property type="entry name" value="DEFENSIN"/>
</dbReference>
<dbReference type="SUPFAM" id="SSF57095">
    <property type="entry name" value="Scorpion toxin-like"/>
    <property type="match status" value="1"/>
</dbReference>
<dbReference type="PROSITE" id="PS51378">
    <property type="entry name" value="INVERT_DEFENSINS"/>
    <property type="match status" value="1"/>
</dbReference>
<accession>B3EWY5</accession>